<reference key="1">
    <citation type="submission" date="2006-12" db="EMBL/GenBank/DDBJ databases">
        <title>Complete sequence of Shewanella sp. W3-18-1.</title>
        <authorList>
            <consortium name="US DOE Joint Genome Institute"/>
            <person name="Copeland A."/>
            <person name="Lucas S."/>
            <person name="Lapidus A."/>
            <person name="Barry K."/>
            <person name="Detter J.C."/>
            <person name="Glavina del Rio T."/>
            <person name="Hammon N."/>
            <person name="Israni S."/>
            <person name="Dalin E."/>
            <person name="Tice H."/>
            <person name="Pitluck S."/>
            <person name="Chain P."/>
            <person name="Malfatti S."/>
            <person name="Shin M."/>
            <person name="Vergez L."/>
            <person name="Schmutz J."/>
            <person name="Larimer F."/>
            <person name="Land M."/>
            <person name="Hauser L."/>
            <person name="Kyrpides N."/>
            <person name="Lykidis A."/>
            <person name="Tiedje J."/>
            <person name="Richardson P."/>
        </authorList>
    </citation>
    <scope>NUCLEOTIDE SEQUENCE [LARGE SCALE GENOMIC DNA]</scope>
    <source>
        <strain>W3-18-1</strain>
    </source>
</reference>
<gene>
    <name evidence="1" type="primary">clpS</name>
    <name type="ordered locus">Sputw3181_1781</name>
</gene>
<dbReference type="EMBL" id="CP000503">
    <property type="protein sequence ID" value="ABM24617.1"/>
    <property type="molecule type" value="Genomic_DNA"/>
</dbReference>
<dbReference type="RefSeq" id="WP_011789114.1">
    <property type="nucleotide sequence ID" value="NC_008750.1"/>
</dbReference>
<dbReference type="SMR" id="A1RIX2"/>
<dbReference type="GeneID" id="67443762"/>
<dbReference type="KEGG" id="shw:Sputw3181_1781"/>
<dbReference type="HOGENOM" id="CLU_134358_2_1_6"/>
<dbReference type="Proteomes" id="UP000002597">
    <property type="component" value="Chromosome"/>
</dbReference>
<dbReference type="GO" id="GO:0030163">
    <property type="term" value="P:protein catabolic process"/>
    <property type="evidence" value="ECO:0007669"/>
    <property type="project" value="InterPro"/>
</dbReference>
<dbReference type="GO" id="GO:0006508">
    <property type="term" value="P:proteolysis"/>
    <property type="evidence" value="ECO:0007669"/>
    <property type="project" value="UniProtKB-UniRule"/>
</dbReference>
<dbReference type="FunFam" id="3.30.1390.10:FF:000002">
    <property type="entry name" value="ATP-dependent Clp protease adapter protein ClpS"/>
    <property type="match status" value="1"/>
</dbReference>
<dbReference type="Gene3D" id="3.30.1390.10">
    <property type="match status" value="1"/>
</dbReference>
<dbReference type="HAMAP" id="MF_00302">
    <property type="entry name" value="ClpS"/>
    <property type="match status" value="1"/>
</dbReference>
<dbReference type="InterPro" id="IPR022935">
    <property type="entry name" value="ClpS"/>
</dbReference>
<dbReference type="InterPro" id="IPR003769">
    <property type="entry name" value="ClpS_core"/>
</dbReference>
<dbReference type="InterPro" id="IPR014719">
    <property type="entry name" value="Ribosomal_bL12_C/ClpS-like"/>
</dbReference>
<dbReference type="NCBIfam" id="NF000670">
    <property type="entry name" value="PRK00033.1-3"/>
    <property type="match status" value="1"/>
</dbReference>
<dbReference type="NCBIfam" id="NF000672">
    <property type="entry name" value="PRK00033.1-5"/>
    <property type="match status" value="1"/>
</dbReference>
<dbReference type="PANTHER" id="PTHR33473:SF19">
    <property type="entry name" value="ATP-DEPENDENT CLP PROTEASE ADAPTER PROTEIN CLPS"/>
    <property type="match status" value="1"/>
</dbReference>
<dbReference type="PANTHER" id="PTHR33473">
    <property type="entry name" value="ATP-DEPENDENT CLP PROTEASE ADAPTER PROTEIN CLPS1, CHLOROPLASTIC"/>
    <property type="match status" value="1"/>
</dbReference>
<dbReference type="Pfam" id="PF02617">
    <property type="entry name" value="ClpS"/>
    <property type="match status" value="1"/>
</dbReference>
<dbReference type="SUPFAM" id="SSF54736">
    <property type="entry name" value="ClpS-like"/>
    <property type="match status" value="1"/>
</dbReference>
<accession>A1RIX2</accession>
<evidence type="ECO:0000255" key="1">
    <source>
        <dbReference type="HAMAP-Rule" id="MF_00302"/>
    </source>
</evidence>
<organism>
    <name type="scientific">Shewanella sp. (strain W3-18-1)</name>
    <dbReference type="NCBI Taxonomy" id="351745"/>
    <lineage>
        <taxon>Bacteria</taxon>
        <taxon>Pseudomonadati</taxon>
        <taxon>Pseudomonadota</taxon>
        <taxon>Gammaproteobacteria</taxon>
        <taxon>Alteromonadales</taxon>
        <taxon>Shewanellaceae</taxon>
        <taxon>Shewanella</taxon>
    </lineage>
</organism>
<comment type="function">
    <text evidence="1">Involved in the modulation of the specificity of the ClpAP-mediated ATP-dependent protein degradation.</text>
</comment>
<comment type="subunit">
    <text evidence="1">Binds to the N-terminal domain of the chaperone ClpA.</text>
</comment>
<comment type="similarity">
    <text evidence="1">Belongs to the ClpS family.</text>
</comment>
<proteinExistence type="inferred from homology"/>
<protein>
    <recommendedName>
        <fullName evidence="1">ATP-dependent Clp protease adapter protein ClpS</fullName>
    </recommendedName>
</protein>
<name>CLPS_SHESW</name>
<sequence>MGKTGNIEHVEERVESELMPPSMYKVILNNDDYTPMDFVIEVLQVFFRKNEQEATDIMLTIHHQGKGICGIFPFGIAETKVIQVNQFARQNQHPLLCSLEKA</sequence>
<feature type="chain" id="PRO_1000022631" description="ATP-dependent Clp protease adapter protein ClpS">
    <location>
        <begin position="1"/>
        <end position="102"/>
    </location>
</feature>